<comment type="similarity">
    <text evidence="1">Belongs to the universal ribosomal protein uS9 family.</text>
</comment>
<protein>
    <recommendedName>
        <fullName evidence="1">Small ribosomal subunit protein uS9</fullName>
    </recommendedName>
    <alternativeName>
        <fullName evidence="2">30S ribosomal protein S9</fullName>
    </alternativeName>
</protein>
<proteinExistence type="inferred from homology"/>
<sequence length="130" mass="14592">MSATQNYGTGRRKTATARVFLRPGTGNISINNRSLDVFFGRETARMVVRQPLELTESVEKFDIYVTVSGGGVSGQAGAIRHGITRALMEYDETLRGALRRAGYVTRDAREVERKKVGLRKARKRPQYSKR</sequence>
<organism>
    <name type="scientific">Pseudomonas putida (strain ATCC 700007 / DSM 6899 / JCM 31910 / BCRC 17059 / LMG 24140 / F1)</name>
    <dbReference type="NCBI Taxonomy" id="351746"/>
    <lineage>
        <taxon>Bacteria</taxon>
        <taxon>Pseudomonadati</taxon>
        <taxon>Pseudomonadota</taxon>
        <taxon>Gammaproteobacteria</taxon>
        <taxon>Pseudomonadales</taxon>
        <taxon>Pseudomonadaceae</taxon>
        <taxon>Pseudomonas</taxon>
    </lineage>
</organism>
<name>RS9_PSEP1</name>
<gene>
    <name evidence="1" type="primary">rpsI</name>
    <name type="ordered locus">Pput_4408</name>
</gene>
<dbReference type="EMBL" id="CP000712">
    <property type="protein sequence ID" value="ABQ80530.1"/>
    <property type="molecule type" value="Genomic_DNA"/>
</dbReference>
<dbReference type="SMR" id="A5W8S0"/>
<dbReference type="KEGG" id="ppf:Pput_4408"/>
<dbReference type="eggNOG" id="COG0103">
    <property type="taxonomic scope" value="Bacteria"/>
</dbReference>
<dbReference type="HOGENOM" id="CLU_046483_2_1_6"/>
<dbReference type="GO" id="GO:0022627">
    <property type="term" value="C:cytosolic small ribosomal subunit"/>
    <property type="evidence" value="ECO:0007669"/>
    <property type="project" value="TreeGrafter"/>
</dbReference>
<dbReference type="GO" id="GO:0003723">
    <property type="term" value="F:RNA binding"/>
    <property type="evidence" value="ECO:0007669"/>
    <property type="project" value="TreeGrafter"/>
</dbReference>
<dbReference type="GO" id="GO:0003735">
    <property type="term" value="F:structural constituent of ribosome"/>
    <property type="evidence" value="ECO:0007669"/>
    <property type="project" value="InterPro"/>
</dbReference>
<dbReference type="GO" id="GO:0006412">
    <property type="term" value="P:translation"/>
    <property type="evidence" value="ECO:0007669"/>
    <property type="project" value="UniProtKB-UniRule"/>
</dbReference>
<dbReference type="FunFam" id="3.30.230.10:FF:000001">
    <property type="entry name" value="30S ribosomal protein S9"/>
    <property type="match status" value="1"/>
</dbReference>
<dbReference type="Gene3D" id="3.30.230.10">
    <property type="match status" value="1"/>
</dbReference>
<dbReference type="HAMAP" id="MF_00532_B">
    <property type="entry name" value="Ribosomal_uS9_B"/>
    <property type="match status" value="1"/>
</dbReference>
<dbReference type="InterPro" id="IPR020568">
    <property type="entry name" value="Ribosomal_Su5_D2-typ_SF"/>
</dbReference>
<dbReference type="InterPro" id="IPR000754">
    <property type="entry name" value="Ribosomal_uS9"/>
</dbReference>
<dbReference type="InterPro" id="IPR023035">
    <property type="entry name" value="Ribosomal_uS9_bac/plastid"/>
</dbReference>
<dbReference type="InterPro" id="IPR020574">
    <property type="entry name" value="Ribosomal_uS9_CS"/>
</dbReference>
<dbReference type="InterPro" id="IPR014721">
    <property type="entry name" value="Ribsml_uS5_D2-typ_fold_subgr"/>
</dbReference>
<dbReference type="NCBIfam" id="NF001099">
    <property type="entry name" value="PRK00132.1"/>
    <property type="match status" value="1"/>
</dbReference>
<dbReference type="PANTHER" id="PTHR21569">
    <property type="entry name" value="RIBOSOMAL PROTEIN S9"/>
    <property type="match status" value="1"/>
</dbReference>
<dbReference type="PANTHER" id="PTHR21569:SF1">
    <property type="entry name" value="SMALL RIBOSOMAL SUBUNIT PROTEIN US9M"/>
    <property type="match status" value="1"/>
</dbReference>
<dbReference type="Pfam" id="PF00380">
    <property type="entry name" value="Ribosomal_S9"/>
    <property type="match status" value="1"/>
</dbReference>
<dbReference type="SUPFAM" id="SSF54211">
    <property type="entry name" value="Ribosomal protein S5 domain 2-like"/>
    <property type="match status" value="1"/>
</dbReference>
<dbReference type="PROSITE" id="PS00360">
    <property type="entry name" value="RIBOSOMAL_S9"/>
    <property type="match status" value="1"/>
</dbReference>
<evidence type="ECO:0000255" key="1">
    <source>
        <dbReference type="HAMAP-Rule" id="MF_00532"/>
    </source>
</evidence>
<evidence type="ECO:0000305" key="2"/>
<feature type="chain" id="PRO_1000051296" description="Small ribosomal subunit protein uS9">
    <location>
        <begin position="1"/>
        <end position="130"/>
    </location>
</feature>
<accession>A5W8S0</accession>
<keyword id="KW-0687">Ribonucleoprotein</keyword>
<keyword id="KW-0689">Ribosomal protein</keyword>
<reference key="1">
    <citation type="submission" date="2007-05" db="EMBL/GenBank/DDBJ databases">
        <title>Complete sequence of Pseudomonas putida F1.</title>
        <authorList>
            <consortium name="US DOE Joint Genome Institute"/>
            <person name="Copeland A."/>
            <person name="Lucas S."/>
            <person name="Lapidus A."/>
            <person name="Barry K."/>
            <person name="Detter J.C."/>
            <person name="Glavina del Rio T."/>
            <person name="Hammon N."/>
            <person name="Israni S."/>
            <person name="Dalin E."/>
            <person name="Tice H."/>
            <person name="Pitluck S."/>
            <person name="Chain P."/>
            <person name="Malfatti S."/>
            <person name="Shin M."/>
            <person name="Vergez L."/>
            <person name="Schmutz J."/>
            <person name="Larimer F."/>
            <person name="Land M."/>
            <person name="Hauser L."/>
            <person name="Kyrpides N."/>
            <person name="Lykidis A."/>
            <person name="Parales R."/>
            <person name="Richardson P."/>
        </authorList>
    </citation>
    <scope>NUCLEOTIDE SEQUENCE [LARGE SCALE GENOMIC DNA]</scope>
    <source>
        <strain>ATCC 700007 / DSM 6899 / JCM 31910 / BCRC 17059 / LMG 24140 / F1</strain>
    </source>
</reference>